<sequence>MKLNKSYILIVVLLLSLFYSSVSSTKTTLIKSNNHYNSDNSNNDNKNININNNNDGDGDDDDDNNKILITPENQNHLIHDIGIDSSSTEILFGSSSNSGSCGEKNNTKQNALANQREANTIIFIIMLILTGSVLIVYFIISLDIPFVPESVAVVTYGIILGIVFRFFYSDIVNHVVSFEPENFFLFILPTIIFETGYSLHKTDFFNNIGPILMFAVFGTIITFLVVGFGIYIVGYFGVSIALSLKDSFAFGSIISSTDPVCTLAIFQALNVDPMLYILVLGESILNDATSMMLYSVVEDTSTRDIIISCAMFTVVAIGSVILGVVMALLLSLILKWINIGKFPALETIFMVMFSYMSYVLAGALDISGVLAVFFFGITLNQYGAYSLSPYTKLTSGQLFRTAAFISETFLFLYFGLSLTAHEFKFDLGLFSWSILFTCLARAISVFPMCFLLNKFLKTKIPWVIQVAIWFAGLRGAFAFSLSLDYISEDEHMNAYIRTNTLLVVVFTIFVFGMGTYPLLRVLGIKTSQTDQSLDNISKPMSKQTKQKDRTKLYESFDDKYFKPWFRKRVPPLANEAIEIFEKMVIQSSHDHELDSNPLRFDDDEEDDDDEDLDFDSDLDLNININTDSIHQSDNNNNDNGNNNNNNNNIIINNNSQHHSNDGSNNKNNDTLPLI</sequence>
<accession>Q552S0</accession>
<accession>Q86IB9</accession>
<reference key="1">
    <citation type="journal article" date="2002" name="Nature">
        <title>Sequence and analysis of chromosome 2 of Dictyostelium discoideum.</title>
        <authorList>
            <person name="Gloeckner G."/>
            <person name="Eichinger L."/>
            <person name="Szafranski K."/>
            <person name="Pachebat J.A."/>
            <person name="Bankier A.T."/>
            <person name="Dear P.H."/>
            <person name="Lehmann R."/>
            <person name="Baumgart C."/>
            <person name="Parra G."/>
            <person name="Abril J.F."/>
            <person name="Guigo R."/>
            <person name="Kumpf K."/>
            <person name="Tunggal B."/>
            <person name="Cox E.C."/>
            <person name="Quail M.A."/>
            <person name="Platzer M."/>
            <person name="Rosenthal A."/>
            <person name="Noegel A.A."/>
        </authorList>
    </citation>
    <scope>NUCLEOTIDE SEQUENCE [LARGE SCALE GENOMIC DNA]</scope>
    <source>
        <strain>AX4</strain>
    </source>
</reference>
<reference key="2">
    <citation type="journal article" date="2005" name="Nature">
        <title>The genome of the social amoeba Dictyostelium discoideum.</title>
        <authorList>
            <person name="Eichinger L."/>
            <person name="Pachebat J.A."/>
            <person name="Gloeckner G."/>
            <person name="Rajandream M.A."/>
            <person name="Sucgang R."/>
            <person name="Berriman M."/>
            <person name="Song J."/>
            <person name="Olsen R."/>
            <person name="Szafranski K."/>
            <person name="Xu Q."/>
            <person name="Tunggal B."/>
            <person name="Kummerfeld S."/>
            <person name="Madera M."/>
            <person name="Konfortov B.A."/>
            <person name="Rivero F."/>
            <person name="Bankier A.T."/>
            <person name="Lehmann R."/>
            <person name="Hamlin N."/>
            <person name="Davies R."/>
            <person name="Gaudet P."/>
            <person name="Fey P."/>
            <person name="Pilcher K."/>
            <person name="Chen G."/>
            <person name="Saunders D."/>
            <person name="Sodergren E.J."/>
            <person name="Davis P."/>
            <person name="Kerhornou A."/>
            <person name="Nie X."/>
            <person name="Hall N."/>
            <person name="Anjard C."/>
            <person name="Hemphill L."/>
            <person name="Bason N."/>
            <person name="Farbrother P."/>
            <person name="Desany B."/>
            <person name="Just E."/>
            <person name="Morio T."/>
            <person name="Rost R."/>
            <person name="Churcher C.M."/>
            <person name="Cooper J."/>
            <person name="Haydock S."/>
            <person name="van Driessche N."/>
            <person name="Cronin A."/>
            <person name="Goodhead I."/>
            <person name="Muzny D.M."/>
            <person name="Mourier T."/>
            <person name="Pain A."/>
            <person name="Lu M."/>
            <person name="Harper D."/>
            <person name="Lindsay R."/>
            <person name="Hauser H."/>
            <person name="James K.D."/>
            <person name="Quiles M."/>
            <person name="Madan Babu M."/>
            <person name="Saito T."/>
            <person name="Buchrieser C."/>
            <person name="Wardroper A."/>
            <person name="Felder M."/>
            <person name="Thangavelu M."/>
            <person name="Johnson D."/>
            <person name="Knights A."/>
            <person name="Loulseged H."/>
            <person name="Mungall K.L."/>
            <person name="Oliver K."/>
            <person name="Price C."/>
            <person name="Quail M.A."/>
            <person name="Urushihara H."/>
            <person name="Hernandez J."/>
            <person name="Rabbinowitsch E."/>
            <person name="Steffen D."/>
            <person name="Sanders M."/>
            <person name="Ma J."/>
            <person name="Kohara Y."/>
            <person name="Sharp S."/>
            <person name="Simmonds M.N."/>
            <person name="Spiegler S."/>
            <person name="Tivey A."/>
            <person name="Sugano S."/>
            <person name="White B."/>
            <person name="Walker D."/>
            <person name="Woodward J.R."/>
            <person name="Winckler T."/>
            <person name="Tanaka Y."/>
            <person name="Shaulsky G."/>
            <person name="Schleicher M."/>
            <person name="Weinstock G.M."/>
            <person name="Rosenthal A."/>
            <person name="Cox E.C."/>
            <person name="Chisholm R.L."/>
            <person name="Gibbs R.A."/>
            <person name="Loomis W.F."/>
            <person name="Platzer M."/>
            <person name="Kay R.R."/>
            <person name="Williams J.G."/>
            <person name="Dear P.H."/>
            <person name="Noegel A.A."/>
            <person name="Barrell B.G."/>
            <person name="Kuspa A."/>
        </authorList>
    </citation>
    <scope>NUCLEOTIDE SEQUENCE [LARGE SCALE GENOMIC DNA]</scope>
    <source>
        <strain>AX4</strain>
    </source>
</reference>
<reference key="3">
    <citation type="journal article" date="2005" name="J. Cell Biol.">
        <title>A developmentally regulated Na-H exchanger in Dictyostelium discoideum is necessary for cell polarity during chemotaxis.</title>
        <authorList>
            <person name="Patel H."/>
            <person name="Barber D.L."/>
        </authorList>
    </citation>
    <scope>FUNCTION</scope>
    <scope>SUBCELLULAR LOCATION</scope>
    <scope>INDUCTION</scope>
    <scope>DISRUPTION PHENOTYPE</scope>
    <scope>ACTIVITY REGULATION</scope>
    <scope>DEVELOPMENTAL STAGE</scope>
</reference>
<reference key="4">
    <citation type="journal article" date="2008" name="BMC Microbiol.">
        <title>Dictyostelium transcriptional responses to Pseudomonas aeruginosa: common and specific effects from PAO1 and PA14 strains.</title>
        <authorList>
            <person name="Carilla-Latorre S."/>
            <person name="Calvo-Garrido J."/>
            <person name="Bloomfield G."/>
            <person name="Skelton J."/>
            <person name="Kay R.R."/>
            <person name="Ivens A."/>
            <person name="Martinez J.L."/>
            <person name="Escalante R."/>
        </authorList>
    </citation>
    <scope>INDUCTION [LARGE SCALE ANALYSIS]</scope>
</reference>
<organism>
    <name type="scientific">Dictyostelium discoideum</name>
    <name type="common">Social amoeba</name>
    <dbReference type="NCBI Taxonomy" id="44689"/>
    <lineage>
        <taxon>Eukaryota</taxon>
        <taxon>Amoebozoa</taxon>
        <taxon>Evosea</taxon>
        <taxon>Eumycetozoa</taxon>
        <taxon>Dictyostelia</taxon>
        <taxon>Dictyosteliales</taxon>
        <taxon>Dictyosteliaceae</taxon>
        <taxon>Dictyostelium</taxon>
    </lineage>
</organism>
<gene>
    <name type="primary">nhe1</name>
    <name type="ORF">DDB_G0275711</name>
</gene>
<proteinExistence type="evidence at transcript level"/>
<feature type="signal peptide" evidence="1">
    <location>
        <begin position="1"/>
        <end position="24"/>
    </location>
</feature>
<feature type="chain" id="PRO_0000386638" description="Sodium/hydrogen exchanger 1">
    <location>
        <begin position="25"/>
        <end position="674"/>
    </location>
</feature>
<feature type="transmembrane region" description="Helical" evidence="1">
    <location>
        <begin position="120"/>
        <end position="140"/>
    </location>
</feature>
<feature type="transmembrane region" description="Helical" evidence="1">
    <location>
        <begin position="144"/>
        <end position="164"/>
    </location>
</feature>
<feature type="transmembrane region" description="Helical" evidence="1">
    <location>
        <begin position="175"/>
        <end position="195"/>
    </location>
</feature>
<feature type="transmembrane region" description="Helical" evidence="1">
    <location>
        <begin position="213"/>
        <end position="233"/>
    </location>
</feature>
<feature type="transmembrane region" description="Helical" evidence="1">
    <location>
        <begin position="275"/>
        <end position="297"/>
    </location>
</feature>
<feature type="transmembrane region" description="Helical" evidence="1">
    <location>
        <begin position="314"/>
        <end position="334"/>
    </location>
</feature>
<feature type="transmembrane region" description="Helical" evidence="1">
    <location>
        <begin position="336"/>
        <end position="356"/>
    </location>
</feature>
<feature type="transmembrane region" description="Helical" evidence="1">
    <location>
        <begin position="359"/>
        <end position="379"/>
    </location>
</feature>
<feature type="transmembrane region" description="Helical" evidence="1">
    <location>
        <begin position="401"/>
        <end position="421"/>
    </location>
</feature>
<feature type="transmembrane region" description="Helical" evidence="1">
    <location>
        <begin position="432"/>
        <end position="452"/>
    </location>
</feature>
<feature type="transmembrane region" description="Helical" evidence="1">
    <location>
        <begin position="460"/>
        <end position="480"/>
    </location>
</feature>
<feature type="transmembrane region" description="Helical" evidence="1">
    <location>
        <begin position="499"/>
        <end position="519"/>
    </location>
</feature>
<feature type="region of interest" description="Disordered" evidence="2">
    <location>
        <begin position="31"/>
        <end position="65"/>
    </location>
</feature>
<feature type="region of interest" description="Disordered" evidence="2">
    <location>
        <begin position="591"/>
        <end position="674"/>
    </location>
</feature>
<feature type="compositionally biased region" description="Low complexity" evidence="2">
    <location>
        <begin position="37"/>
        <end position="55"/>
    </location>
</feature>
<feature type="compositionally biased region" description="Acidic residues" evidence="2">
    <location>
        <begin position="601"/>
        <end position="618"/>
    </location>
</feature>
<feature type="compositionally biased region" description="Low complexity" evidence="2">
    <location>
        <begin position="627"/>
        <end position="657"/>
    </location>
</feature>
<feature type="compositionally biased region" description="Polar residues" evidence="2">
    <location>
        <begin position="662"/>
        <end position="674"/>
    </location>
</feature>
<dbReference type="EMBL" id="AAFI02000013">
    <property type="protein sequence ID" value="EAL69606.1"/>
    <property type="molecule type" value="Genomic_DNA"/>
</dbReference>
<dbReference type="RefSeq" id="XP_643611.1">
    <property type="nucleotide sequence ID" value="XM_638519.1"/>
</dbReference>
<dbReference type="SMR" id="Q552S0"/>
<dbReference type="FunCoup" id="Q552S0">
    <property type="interactions" value="189"/>
</dbReference>
<dbReference type="STRING" id="44689.Q552S0"/>
<dbReference type="TCDB" id="2.A.36.1.11">
    <property type="family name" value="the monovalent cation:proton antiporter-1 (cpa1) family"/>
</dbReference>
<dbReference type="PaxDb" id="44689-DDB0231789"/>
<dbReference type="EnsemblProtists" id="EAL69606">
    <property type="protein sequence ID" value="EAL69606"/>
    <property type="gene ID" value="DDB_G0275711"/>
</dbReference>
<dbReference type="GeneID" id="8620198"/>
<dbReference type="KEGG" id="ddi:DDB_G0275711"/>
<dbReference type="dictyBase" id="DDB_G0275711">
    <property type="gene designation" value="nhe1"/>
</dbReference>
<dbReference type="VEuPathDB" id="AmoebaDB:DDB_G0275711"/>
<dbReference type="eggNOG" id="KOG1965">
    <property type="taxonomic scope" value="Eukaryota"/>
</dbReference>
<dbReference type="HOGENOM" id="CLU_005912_11_0_1"/>
<dbReference type="InParanoid" id="Q552S0"/>
<dbReference type="OMA" id="MVYQVVA"/>
<dbReference type="PhylomeDB" id="Q552S0"/>
<dbReference type="Reactome" id="R-DDI-425986">
    <property type="pathway name" value="Sodium/Proton exchangers"/>
</dbReference>
<dbReference type="PRO" id="PR:Q552S0"/>
<dbReference type="Proteomes" id="UP000002195">
    <property type="component" value="Chromosome 2"/>
</dbReference>
<dbReference type="GO" id="GO:0031252">
    <property type="term" value="C:cell leading edge"/>
    <property type="evidence" value="ECO:0000314"/>
    <property type="project" value="dictyBase"/>
</dbReference>
<dbReference type="GO" id="GO:0005737">
    <property type="term" value="C:cytoplasm"/>
    <property type="evidence" value="ECO:0000314"/>
    <property type="project" value="dictyBase"/>
</dbReference>
<dbReference type="GO" id="GO:0031256">
    <property type="term" value="C:leading edge membrane"/>
    <property type="evidence" value="ECO:0000314"/>
    <property type="project" value="dictyBase"/>
</dbReference>
<dbReference type="GO" id="GO:0016020">
    <property type="term" value="C:membrane"/>
    <property type="evidence" value="ECO:0000314"/>
    <property type="project" value="dictyBase"/>
</dbReference>
<dbReference type="GO" id="GO:0005886">
    <property type="term" value="C:plasma membrane"/>
    <property type="evidence" value="ECO:0000318"/>
    <property type="project" value="GO_Central"/>
</dbReference>
<dbReference type="GO" id="GO:0015386">
    <property type="term" value="F:potassium:proton antiporter activity"/>
    <property type="evidence" value="ECO:0000318"/>
    <property type="project" value="GO_Central"/>
</dbReference>
<dbReference type="GO" id="GO:0015385">
    <property type="term" value="F:sodium:proton antiporter activity"/>
    <property type="evidence" value="ECO:0000250"/>
    <property type="project" value="dictyBase"/>
</dbReference>
<dbReference type="GO" id="GO:0070650">
    <property type="term" value="P:actin filament bundle distribution"/>
    <property type="evidence" value="ECO:0000315"/>
    <property type="project" value="dictyBase"/>
</dbReference>
<dbReference type="GO" id="GO:0030041">
    <property type="term" value="P:actin filament polymerization"/>
    <property type="evidence" value="ECO:0000315"/>
    <property type="project" value="dictyBase"/>
</dbReference>
<dbReference type="GO" id="GO:0097230">
    <property type="term" value="P:cell motility in response to potassium ion"/>
    <property type="evidence" value="ECO:0000315"/>
    <property type="project" value="dictyBase"/>
</dbReference>
<dbReference type="GO" id="GO:0006935">
    <property type="term" value="P:chemotaxis"/>
    <property type="evidence" value="ECO:0000315"/>
    <property type="project" value="dictyBase"/>
</dbReference>
<dbReference type="GO" id="GO:0043327">
    <property type="term" value="P:chemotaxis to cAMP"/>
    <property type="evidence" value="ECO:0000315"/>
    <property type="project" value="dictyBase"/>
</dbReference>
<dbReference type="GO" id="GO:0030010">
    <property type="term" value="P:establishment of cell polarity"/>
    <property type="evidence" value="ECO:0000316"/>
    <property type="project" value="dictyBase"/>
</dbReference>
<dbReference type="GO" id="GO:0003365">
    <property type="term" value="P:establishment of cell polarity involved in ameboidal cell migration"/>
    <property type="evidence" value="ECO:0000315"/>
    <property type="project" value="dictyBase"/>
</dbReference>
<dbReference type="GO" id="GO:0030838">
    <property type="term" value="P:positive regulation of actin filament polymerization"/>
    <property type="evidence" value="ECO:0000315"/>
    <property type="project" value="dictyBase"/>
</dbReference>
<dbReference type="GO" id="GO:0071805">
    <property type="term" value="P:potassium ion transmembrane transport"/>
    <property type="evidence" value="ECO:0000318"/>
    <property type="project" value="GO_Central"/>
</dbReference>
<dbReference type="GO" id="GO:0036051">
    <property type="term" value="P:protein localization to trailing edge"/>
    <property type="evidence" value="ECO:0000315"/>
    <property type="project" value="dictyBase"/>
</dbReference>
<dbReference type="GO" id="GO:0051453">
    <property type="term" value="P:regulation of intracellular pH"/>
    <property type="evidence" value="ECO:0000315"/>
    <property type="project" value="dictyBase"/>
</dbReference>
<dbReference type="GO" id="GO:0061118">
    <property type="term" value="P:regulation of positive chemotaxis to cAMP"/>
    <property type="evidence" value="ECO:0000315"/>
    <property type="project" value="dictyBase"/>
</dbReference>
<dbReference type="GO" id="GO:0051592">
    <property type="term" value="P:response to calcium ion"/>
    <property type="evidence" value="ECO:0000315"/>
    <property type="project" value="dictyBase"/>
</dbReference>
<dbReference type="GO" id="GO:0035864">
    <property type="term" value="P:response to potassium ion"/>
    <property type="evidence" value="ECO:0000315"/>
    <property type="project" value="dictyBase"/>
</dbReference>
<dbReference type="GO" id="GO:0098719">
    <property type="term" value="P:sodium ion import across plasma membrane"/>
    <property type="evidence" value="ECO:0000318"/>
    <property type="project" value="GO_Central"/>
</dbReference>
<dbReference type="Gene3D" id="6.10.140.1330">
    <property type="match status" value="1"/>
</dbReference>
<dbReference type="InterPro" id="IPR018422">
    <property type="entry name" value="Cation/H_exchanger_CPA1"/>
</dbReference>
<dbReference type="InterPro" id="IPR006153">
    <property type="entry name" value="Cation/H_exchanger_TM"/>
</dbReference>
<dbReference type="InterPro" id="IPR004709">
    <property type="entry name" value="NaH_exchanger"/>
</dbReference>
<dbReference type="NCBIfam" id="TIGR00840">
    <property type="entry name" value="b_cpa1"/>
    <property type="match status" value="1"/>
</dbReference>
<dbReference type="PANTHER" id="PTHR10110">
    <property type="entry name" value="SODIUM/HYDROGEN EXCHANGER"/>
    <property type="match status" value="1"/>
</dbReference>
<dbReference type="PANTHER" id="PTHR10110:SF128">
    <property type="entry name" value="SODIUM_HYDROGEN EXCHANGER 1"/>
    <property type="match status" value="1"/>
</dbReference>
<dbReference type="Pfam" id="PF00999">
    <property type="entry name" value="Na_H_Exchanger"/>
    <property type="match status" value="1"/>
</dbReference>
<dbReference type="PRINTS" id="PR01084">
    <property type="entry name" value="NAHEXCHNGR"/>
</dbReference>
<protein>
    <recommendedName>
        <fullName>Sodium/hydrogen exchanger 1</fullName>
        <shortName>DdNHE1</shortName>
        <shortName>NHE1</shortName>
        <shortName>Na-H exchanger 1</shortName>
    </recommendedName>
</protein>
<name>NHE1_DICDI</name>
<evidence type="ECO:0000255" key="1"/>
<evidence type="ECO:0000256" key="2">
    <source>
        <dbReference type="SAM" id="MobiDB-lite"/>
    </source>
</evidence>
<evidence type="ECO:0000269" key="3">
    <source>
    </source>
</evidence>
<evidence type="ECO:0000269" key="4">
    <source>
    </source>
</evidence>
<evidence type="ECO:0000305" key="5"/>
<comment type="function">
    <text evidence="3">Regulation of intracellular pH homeostasis in response to cAMP, which is essential for chemotaxis. Necessary for F-actin localization and the kinetics of actin polymerization during chemotaxis and cell polarity but not for directional sensing.</text>
</comment>
<comment type="activity regulation">
    <text evidence="3">LY294002, an inhibitor of the catalytic subunit of PI3-kinase, blocks NHE1-dependent (but not NHE1-independent) increase in intracellular pH in response to cAMP.</text>
</comment>
<comment type="subcellular location">
    <subcellularLocation>
        <location evidence="5">Membrane</location>
        <topology evidence="5">Multi-pass membrane protein</topology>
    </subcellularLocation>
    <text evidence="3">Predominantly localizes to the leading-edge of the chemotaxing polarized cells.</text>
</comment>
<comment type="developmental stage">
    <text evidence="3">Expressed in chemotactically competent cells but in not vegetative cells.</text>
</comment>
<comment type="induction">
    <text evidence="3 4">Expression is induced 6 hours after starvation. Down-regulated by Pseudomonas aeruginosa infection (strains PAO1 and PA14).</text>
</comment>
<comment type="disruption phenotype">
    <text evidence="3">Impaired polarity. Starved mutant cells differentiate, and in response to the chemoattractant cAMP retain directional sensing; however, they cannot attain a polarized morphology, but instead extend mislocalized pseudopodia around the cell and exhibit decreased velocity. In response to chemoattractant, mutant cells lack a leading edge localization of F-actin and have significantly attenuated de novo F-actin polymerization but increased abundance of membrane-associated phosphatidylinositol 3,4,5-trisphosphate. However, they retain directional sensing.</text>
</comment>
<comment type="similarity">
    <text evidence="5">Belongs to the monovalent cation:proton antiporter 1 (CPA1) transporter (TC 2.A.36) family.</text>
</comment>
<keyword id="KW-0050">Antiport</keyword>
<keyword id="KW-0406">Ion transport</keyword>
<keyword id="KW-0472">Membrane</keyword>
<keyword id="KW-1185">Reference proteome</keyword>
<keyword id="KW-0732">Signal</keyword>
<keyword id="KW-0915">Sodium</keyword>
<keyword id="KW-0739">Sodium transport</keyword>
<keyword id="KW-0812">Transmembrane</keyword>
<keyword id="KW-1133">Transmembrane helix</keyword>
<keyword id="KW-0813">Transport</keyword>